<evidence type="ECO:0000255" key="1">
    <source>
        <dbReference type="HAMAP-Rule" id="MF_03104"/>
    </source>
</evidence>
<evidence type="ECO:0000256" key="2">
    <source>
        <dbReference type="SAM" id="MobiDB-lite"/>
    </source>
</evidence>
<dbReference type="EMBL" id="KN305540">
    <property type="protein sequence ID" value="EEH15851.2"/>
    <property type="molecule type" value="Genomic_DNA"/>
</dbReference>
<dbReference type="VEuPathDB" id="FungiDB:PABG_05938"/>
<dbReference type="HOGENOM" id="CLU_026794_0_0_1"/>
<dbReference type="OrthoDB" id="33278at33183"/>
<dbReference type="GO" id="GO:0005789">
    <property type="term" value="C:endoplasmic reticulum membrane"/>
    <property type="evidence" value="ECO:0007669"/>
    <property type="project" value="UniProtKB-SubCell"/>
</dbReference>
<dbReference type="GO" id="GO:0032865">
    <property type="term" value="C:ERMES complex"/>
    <property type="evidence" value="ECO:0007669"/>
    <property type="project" value="UniProtKB-UniRule"/>
</dbReference>
<dbReference type="GO" id="GO:0008289">
    <property type="term" value="F:lipid binding"/>
    <property type="evidence" value="ECO:0007669"/>
    <property type="project" value="UniProtKB-KW"/>
</dbReference>
<dbReference type="GO" id="GO:0000002">
    <property type="term" value="P:mitochondrial genome maintenance"/>
    <property type="evidence" value="ECO:0007669"/>
    <property type="project" value="UniProtKB-UniRule"/>
</dbReference>
<dbReference type="GO" id="GO:1990456">
    <property type="term" value="P:mitochondrion-endoplasmic reticulum membrane tethering"/>
    <property type="evidence" value="ECO:0007669"/>
    <property type="project" value="TreeGrafter"/>
</dbReference>
<dbReference type="GO" id="GO:0015914">
    <property type="term" value="P:phospholipid transport"/>
    <property type="evidence" value="ECO:0007669"/>
    <property type="project" value="TreeGrafter"/>
</dbReference>
<dbReference type="GO" id="GO:0045040">
    <property type="term" value="P:protein insertion into mitochondrial outer membrane"/>
    <property type="evidence" value="ECO:0007669"/>
    <property type="project" value="UniProtKB-UniRule"/>
</dbReference>
<dbReference type="CDD" id="cd21672">
    <property type="entry name" value="SMP_Mdm12"/>
    <property type="match status" value="1"/>
</dbReference>
<dbReference type="HAMAP" id="MF_03104">
    <property type="entry name" value="Mdm12"/>
    <property type="match status" value="1"/>
</dbReference>
<dbReference type="InterPro" id="IPR027532">
    <property type="entry name" value="Mdm12"/>
</dbReference>
<dbReference type="InterPro" id="IPR031468">
    <property type="entry name" value="SMP_LBD"/>
</dbReference>
<dbReference type="PANTHER" id="PTHR28204">
    <property type="entry name" value="MITOCHONDRIAL DISTRIBUTION AND MORPHOLOGY PROTEIN 12"/>
    <property type="match status" value="1"/>
</dbReference>
<dbReference type="PANTHER" id="PTHR28204:SF1">
    <property type="entry name" value="MITOCHONDRIAL DISTRIBUTION AND MORPHOLOGY PROTEIN 12"/>
    <property type="match status" value="1"/>
</dbReference>
<dbReference type="PROSITE" id="PS51847">
    <property type="entry name" value="SMP"/>
    <property type="match status" value="1"/>
</dbReference>
<sequence>MSIDIDWERATSGPDGELLAERIRSFIHDKFQQMVLPRFIRSVQVTSFNFGTIPPELEIRDLTDPFPDFYEDGDEDLSVSSEEQSPMREQADRYRERIDSWQTNSPGGLEVQMSGRMGFGHPLQLAPDEDGSRLHPLRSPINLGDINPYLFPRSGTPGIPGGTSNLGYFMPLSGLSGSQTPLRAVTRGNPFSGGWPDSPLENESRMGHGQGPPRRRSEVNVDAIQSRPSTVNTGNTLFSRGSVSTGDPRHSHSSQTVLANNPGQAPEANDSPVSAVPPLSGTPPRRMREQKAEDFQVFCRTKYAGNISLSLTAEILLDYPMPSFVGLPLKLNITGLTFDAVAVLAYIRRRIHFCFLSPEDAYALIGPETGGGGGDTMEPNSLRRKNLSLLRKIRVESEIGRKENGKQALKNVGKVEKFVLEQVRRIFEEEFVYPSFWTFLV</sequence>
<keyword id="KW-0256">Endoplasmic reticulum</keyword>
<keyword id="KW-0445">Lipid transport</keyword>
<keyword id="KW-0446">Lipid-binding</keyword>
<keyword id="KW-0472">Membrane</keyword>
<keyword id="KW-0496">Mitochondrion</keyword>
<keyword id="KW-1000">Mitochondrion outer membrane</keyword>
<keyword id="KW-0813">Transport</keyword>
<accession>C0SE33</accession>
<protein>
    <recommendedName>
        <fullName evidence="1">Mitochondrial distribution and morphology protein 12</fullName>
    </recommendedName>
    <alternativeName>
        <fullName evidence="1">Mitochondrial inheritance component MDM12</fullName>
    </alternativeName>
</protein>
<name>MDM12_PARBP</name>
<gene>
    <name evidence="1" type="primary">MDM12</name>
    <name type="ORF">PABG_05938</name>
</gene>
<reference key="1">
    <citation type="journal article" date="2011" name="PLoS Genet.">
        <title>Comparative genomic analysis of human fungal pathogens causing paracoccidioidomycosis.</title>
        <authorList>
            <person name="Desjardins C.A."/>
            <person name="Champion M.D."/>
            <person name="Holder J.W."/>
            <person name="Muszewska A."/>
            <person name="Goldberg J."/>
            <person name="Bailao A.M."/>
            <person name="Brigido M.M."/>
            <person name="Ferreira M.E."/>
            <person name="Garcia A.M."/>
            <person name="Grynberg M."/>
            <person name="Gujja S."/>
            <person name="Heiman D.I."/>
            <person name="Henn M.R."/>
            <person name="Kodira C.D."/>
            <person name="Leon-Narvaez H."/>
            <person name="Longo L.V.G."/>
            <person name="Ma L.-J."/>
            <person name="Malavazi I."/>
            <person name="Matsuo A.L."/>
            <person name="Morais F.V."/>
            <person name="Pereira M."/>
            <person name="Rodriguez-Brito S."/>
            <person name="Sakthikumar S."/>
            <person name="Salem-Izacc S.M."/>
            <person name="Sykes S.M."/>
            <person name="Teixeira M.M."/>
            <person name="Vallejo M.C."/>
            <person name="Walter M.E."/>
            <person name="Yandava C."/>
            <person name="Young S."/>
            <person name="Zeng Q."/>
            <person name="Zucker J."/>
            <person name="Felipe M.S."/>
            <person name="Goldman G.H."/>
            <person name="Haas B.J."/>
            <person name="McEwen J.G."/>
            <person name="Nino-Vega G."/>
            <person name="Puccia R."/>
            <person name="San-Blas G."/>
            <person name="Soares C.M."/>
            <person name="Birren B.W."/>
            <person name="Cuomo C.A."/>
        </authorList>
    </citation>
    <scope>NUCLEOTIDE SEQUENCE [LARGE SCALE GENOMIC DNA]</scope>
    <source>
        <strain>Pb03</strain>
    </source>
</reference>
<feature type="chain" id="PRO_0000384298" description="Mitochondrial distribution and morphology protein 12">
    <location>
        <begin position="1"/>
        <end position="441"/>
    </location>
</feature>
<feature type="domain" description="SMP-LTD" evidence="1">
    <location>
        <begin position="1"/>
        <end position="441"/>
    </location>
</feature>
<feature type="region of interest" description="Disordered" evidence="2">
    <location>
        <begin position="70"/>
        <end position="89"/>
    </location>
</feature>
<feature type="region of interest" description="Disordered" evidence="2">
    <location>
        <begin position="180"/>
        <end position="289"/>
    </location>
</feature>
<feature type="compositionally biased region" description="Polar residues" evidence="2">
    <location>
        <begin position="226"/>
        <end position="245"/>
    </location>
</feature>
<feature type="compositionally biased region" description="Polar residues" evidence="2">
    <location>
        <begin position="253"/>
        <end position="263"/>
    </location>
</feature>
<comment type="function">
    <text evidence="1">Component of the ERMES/MDM complex, which serves as a molecular tether to connect the endoplasmic reticulum (ER) and mitochondria. Components of this complex are involved in the control of mitochondrial shape and protein biogenesis, and function in nonvesicular lipid trafficking between the ER and mitochondria. MDM12 is required for the interaction of the ER-resident membrane protein MMM1 and the outer mitochondrial membrane-resident beta-barrel protein MDM10. The MDM12-MMM1 subcomplex functions in the major beta-barrel assembly pathway that is responsible for biogenesis of all mitochondrial outer membrane beta-barrel proteins, and acts in a late step after the SAM complex. The MDM10-MDM12-MMM1 subcomplex further acts in the TOM40-specific pathway after the action of the MDM12-MMM1 complex. Essential for establishing and maintaining the structure of mitochondria and maintenance of mtDNA nucleoids.</text>
</comment>
<comment type="subunit">
    <text evidence="1">Component of the ER-mitochondria encounter structure (ERMES) or MDM complex, composed of MMM1, MDM10, MDM12 and MDM34. A MMM1 homodimer associates with one molecule of MDM12 on each side in a pairwise head-to-tail manner, and the SMP-LTD domains of MMM1 and MDM12 generate a continuous hydrophobic tunnel for phospholipid trafficking.</text>
</comment>
<comment type="subcellular location">
    <subcellularLocation>
        <location evidence="1">Mitochondrion outer membrane</location>
        <topology evidence="1">Peripheral membrane protein</topology>
        <orientation evidence="1">Cytoplasmic side</orientation>
    </subcellularLocation>
    <subcellularLocation>
        <location evidence="1">Endoplasmic reticulum membrane</location>
        <topology evidence="1">Peripheral membrane protein</topology>
        <orientation evidence="1">Cytoplasmic side</orientation>
    </subcellularLocation>
    <text evidence="1">The ERMES/MDM complex localizes to a few discrete foci (around 10 per single cell), that represent mitochondria-endoplasmic reticulum junctions. These foci are often found next to mtDNA nucleoids.</text>
</comment>
<comment type="domain">
    <text evidence="1">The SMP-LTD domain is a barrel-like domain that can bind various types of glycerophospholipids in its interior and mediate their transfer between two adjacent bilayers.</text>
</comment>
<comment type="similarity">
    <text evidence="1">Belongs to the MDM12 family.</text>
</comment>
<organism>
    <name type="scientific">Paracoccidioides brasiliensis (strain Pb03)</name>
    <dbReference type="NCBI Taxonomy" id="482561"/>
    <lineage>
        <taxon>Eukaryota</taxon>
        <taxon>Fungi</taxon>
        <taxon>Dikarya</taxon>
        <taxon>Ascomycota</taxon>
        <taxon>Pezizomycotina</taxon>
        <taxon>Eurotiomycetes</taxon>
        <taxon>Eurotiomycetidae</taxon>
        <taxon>Onygenales</taxon>
        <taxon>Ajellomycetaceae</taxon>
        <taxon>Paracoccidioides</taxon>
    </lineage>
</organism>
<proteinExistence type="inferred from homology"/>